<comment type="function">
    <text evidence="1">Essential subunit of the Sec protein translocation channel SecYEG. Clamps together the 2 halves of SecY. May contact the channel plug during translocation.</text>
</comment>
<comment type="subunit">
    <text evidence="1">Component of the Sec protein translocase complex. Heterotrimer consisting of SecY (alpha), SecG (beta) and SecE (gamma) subunits. The heterotrimers can form oligomers, although 1 heterotrimer is thought to be able to translocate proteins. Interacts with the ribosome. May interact with SecDF, and other proteins may be involved.</text>
</comment>
<comment type="subcellular location">
    <subcellularLocation>
        <location evidence="1">Cell membrane</location>
        <topology evidence="1">Single-pass membrane protein</topology>
    </subcellularLocation>
</comment>
<comment type="similarity">
    <text evidence="1">Belongs to the SecE/SEC61-gamma family.</text>
</comment>
<evidence type="ECO:0000255" key="1">
    <source>
        <dbReference type="HAMAP-Rule" id="MF_00422"/>
    </source>
</evidence>
<dbReference type="EMBL" id="CP000300">
    <property type="protein sequence ID" value="ABE52824.1"/>
    <property type="molecule type" value="Genomic_DNA"/>
</dbReference>
<dbReference type="SMR" id="Q12UQ2"/>
<dbReference type="STRING" id="259564.Mbur_1943"/>
<dbReference type="KEGG" id="mbu:Mbur_1943"/>
<dbReference type="HOGENOM" id="CLU_191921_2_1_2"/>
<dbReference type="OrthoDB" id="52835at2157"/>
<dbReference type="Proteomes" id="UP000001979">
    <property type="component" value="Chromosome"/>
</dbReference>
<dbReference type="GO" id="GO:0005886">
    <property type="term" value="C:plasma membrane"/>
    <property type="evidence" value="ECO:0007669"/>
    <property type="project" value="UniProtKB-SubCell"/>
</dbReference>
<dbReference type="GO" id="GO:0008320">
    <property type="term" value="F:protein transmembrane transporter activity"/>
    <property type="evidence" value="ECO:0007669"/>
    <property type="project" value="UniProtKB-UniRule"/>
</dbReference>
<dbReference type="GO" id="GO:0065002">
    <property type="term" value="P:intracellular protein transmembrane transport"/>
    <property type="evidence" value="ECO:0007669"/>
    <property type="project" value="UniProtKB-UniRule"/>
</dbReference>
<dbReference type="GO" id="GO:0009306">
    <property type="term" value="P:protein secretion"/>
    <property type="evidence" value="ECO:0007669"/>
    <property type="project" value="UniProtKB-UniRule"/>
</dbReference>
<dbReference type="GO" id="GO:0006605">
    <property type="term" value="P:protein targeting"/>
    <property type="evidence" value="ECO:0007669"/>
    <property type="project" value="UniProtKB-UniRule"/>
</dbReference>
<dbReference type="Gene3D" id="1.20.5.820">
    <property type="entry name" value="Preprotein translocase SecE subunit"/>
    <property type="match status" value="1"/>
</dbReference>
<dbReference type="HAMAP" id="MF_00422">
    <property type="entry name" value="SecE"/>
    <property type="match status" value="1"/>
</dbReference>
<dbReference type="InterPro" id="IPR023391">
    <property type="entry name" value="Prot_translocase_SecE_dom_sf"/>
</dbReference>
<dbReference type="InterPro" id="IPR008158">
    <property type="entry name" value="Translocase_Sec61-g"/>
</dbReference>
<dbReference type="InterPro" id="IPR001901">
    <property type="entry name" value="Translocase_SecE/Sec61-g"/>
</dbReference>
<dbReference type="NCBIfam" id="NF006908">
    <property type="entry name" value="PRK09400.1-3"/>
    <property type="match status" value="1"/>
</dbReference>
<dbReference type="NCBIfam" id="TIGR00327">
    <property type="entry name" value="secE_euk_arch"/>
    <property type="match status" value="1"/>
</dbReference>
<dbReference type="Pfam" id="PF00584">
    <property type="entry name" value="SecE"/>
    <property type="match status" value="1"/>
</dbReference>
<dbReference type="SUPFAM" id="SSF103456">
    <property type="entry name" value="Preprotein translocase SecE subunit"/>
    <property type="match status" value="1"/>
</dbReference>
<keyword id="KW-1003">Cell membrane</keyword>
<keyword id="KW-0472">Membrane</keyword>
<keyword id="KW-0653">Protein transport</keyword>
<keyword id="KW-0811">Translocation</keyword>
<keyword id="KW-0812">Transmembrane</keyword>
<keyword id="KW-1133">Transmembrane helix</keyword>
<keyword id="KW-0813">Transport</keyword>
<gene>
    <name evidence="1" type="primary">secE</name>
    <name type="ordered locus">Mbur_1943</name>
</gene>
<accession>Q12UQ2</accession>
<organism>
    <name type="scientific">Methanococcoides burtonii (strain DSM 6242 / NBRC 107633 / OCM 468 / ACE-M)</name>
    <dbReference type="NCBI Taxonomy" id="259564"/>
    <lineage>
        <taxon>Archaea</taxon>
        <taxon>Methanobacteriati</taxon>
        <taxon>Methanobacteriota</taxon>
        <taxon>Stenosarchaea group</taxon>
        <taxon>Methanomicrobia</taxon>
        <taxon>Methanosarcinales</taxon>
        <taxon>Methanosarcinaceae</taxon>
        <taxon>Methanococcoides</taxon>
    </lineage>
</organism>
<proteinExistence type="inferred from homology"/>
<reference key="1">
    <citation type="journal article" date="2009" name="ISME J.">
        <title>The genome sequence of the psychrophilic archaeon, Methanococcoides burtonii: the role of genome evolution in cold adaptation.</title>
        <authorList>
            <person name="Allen M.A."/>
            <person name="Lauro F.M."/>
            <person name="Williams T.J."/>
            <person name="Burg D."/>
            <person name="Siddiqui K.S."/>
            <person name="De Francisci D."/>
            <person name="Chong K.W."/>
            <person name="Pilak O."/>
            <person name="Chew H.H."/>
            <person name="De Maere M.Z."/>
            <person name="Ting L."/>
            <person name="Katrib M."/>
            <person name="Ng C."/>
            <person name="Sowers K.R."/>
            <person name="Galperin M.Y."/>
            <person name="Anderson I.J."/>
            <person name="Ivanova N."/>
            <person name="Dalin E."/>
            <person name="Martinez M."/>
            <person name="Lapidus A."/>
            <person name="Hauser L."/>
            <person name="Land M."/>
            <person name="Thomas T."/>
            <person name="Cavicchioli R."/>
        </authorList>
    </citation>
    <scope>NUCLEOTIDE SEQUENCE [LARGE SCALE GENOMIC DNA]</scope>
    <source>
        <strain>DSM 6242 / NBRC 107633 / OCM 468 / ACE-M</strain>
    </source>
</reference>
<name>SECE_METBU</name>
<protein>
    <recommendedName>
        <fullName evidence="1">Protein translocase subunit SecE</fullName>
    </recommendedName>
    <alternativeName>
        <fullName evidence="1">Protein transport protein Sec61 gamma subunit homolog</fullName>
    </alternativeName>
</protein>
<sequence>MAESILKSAKINRNVGQVLKSYLRVLKLSKKPSREEFLMISKVAGAGILVIGFVGFLIYVLLTEVPKWV</sequence>
<feature type="chain" id="PRO_0000273136" description="Protein translocase subunit SecE">
    <location>
        <begin position="1"/>
        <end position="69"/>
    </location>
</feature>
<feature type="transmembrane region" description="Helical" evidence="1">
    <location>
        <begin position="43"/>
        <end position="63"/>
    </location>
</feature>